<comment type="function">
    <text evidence="1">Specifically methylates the N7 position of guanine in position 527 of 16S rRNA.</text>
</comment>
<comment type="catalytic activity">
    <reaction evidence="1">
        <text>guanosine(527) in 16S rRNA + S-adenosyl-L-methionine = N(7)-methylguanosine(527) in 16S rRNA + S-adenosyl-L-homocysteine</text>
        <dbReference type="Rhea" id="RHEA:42732"/>
        <dbReference type="Rhea" id="RHEA-COMP:10209"/>
        <dbReference type="Rhea" id="RHEA-COMP:10210"/>
        <dbReference type="ChEBI" id="CHEBI:57856"/>
        <dbReference type="ChEBI" id="CHEBI:59789"/>
        <dbReference type="ChEBI" id="CHEBI:74269"/>
        <dbReference type="ChEBI" id="CHEBI:74480"/>
        <dbReference type="EC" id="2.1.1.170"/>
    </reaction>
</comment>
<comment type="subcellular location">
    <subcellularLocation>
        <location evidence="1">Cytoplasm</location>
    </subcellularLocation>
</comment>
<comment type="similarity">
    <text evidence="1">Belongs to the methyltransferase superfamily. RNA methyltransferase RsmG family.</text>
</comment>
<feature type="chain" id="PRO_1000118167" description="Ribosomal RNA small subunit methyltransferase G">
    <location>
        <begin position="1"/>
        <end position="205"/>
    </location>
</feature>
<feature type="binding site" evidence="1">
    <location>
        <position position="66"/>
    </location>
    <ligand>
        <name>S-adenosyl-L-methionine</name>
        <dbReference type="ChEBI" id="CHEBI:59789"/>
    </ligand>
</feature>
<feature type="binding site" evidence="1">
    <location>
        <position position="71"/>
    </location>
    <ligand>
        <name>S-adenosyl-L-methionine</name>
        <dbReference type="ChEBI" id="CHEBI:59789"/>
    </ligand>
</feature>
<feature type="binding site" evidence="1">
    <location>
        <begin position="119"/>
        <end position="120"/>
    </location>
    <ligand>
        <name>S-adenosyl-L-methionine</name>
        <dbReference type="ChEBI" id="CHEBI:59789"/>
    </ligand>
</feature>
<feature type="binding site" evidence="1">
    <location>
        <position position="135"/>
    </location>
    <ligand>
        <name>S-adenosyl-L-methionine</name>
        <dbReference type="ChEBI" id="CHEBI:59789"/>
    </ligand>
</feature>
<reference key="1">
    <citation type="journal article" date="2009" name="J. Bacteriol.">
        <title>Genome sequences of three Agrobacterium biovars help elucidate the evolution of multichromosome genomes in bacteria.</title>
        <authorList>
            <person name="Slater S.C."/>
            <person name="Goldman B.S."/>
            <person name="Goodner B."/>
            <person name="Setubal J.C."/>
            <person name="Farrand S.K."/>
            <person name="Nester E.W."/>
            <person name="Burr T.J."/>
            <person name="Banta L."/>
            <person name="Dickerman A.W."/>
            <person name="Paulsen I."/>
            <person name="Otten L."/>
            <person name="Suen G."/>
            <person name="Welch R."/>
            <person name="Almeida N.F."/>
            <person name="Arnold F."/>
            <person name="Burton O.T."/>
            <person name="Du Z."/>
            <person name="Ewing A."/>
            <person name="Godsy E."/>
            <person name="Heisel S."/>
            <person name="Houmiel K.L."/>
            <person name="Jhaveri J."/>
            <person name="Lu J."/>
            <person name="Miller N.M."/>
            <person name="Norton S."/>
            <person name="Chen Q."/>
            <person name="Phoolcharoen W."/>
            <person name="Ohlin V."/>
            <person name="Ondrusek D."/>
            <person name="Pride N."/>
            <person name="Stricklin S.L."/>
            <person name="Sun J."/>
            <person name="Wheeler C."/>
            <person name="Wilson L."/>
            <person name="Zhu H."/>
            <person name="Wood D.W."/>
        </authorList>
    </citation>
    <scope>NUCLEOTIDE SEQUENCE [LARGE SCALE GENOMIC DNA]</scope>
    <source>
        <strain>K84 / ATCC BAA-868</strain>
    </source>
</reference>
<proteinExistence type="inferred from homology"/>
<organism>
    <name type="scientific">Rhizobium rhizogenes (strain K84 / ATCC BAA-868)</name>
    <name type="common">Agrobacterium radiobacter</name>
    <dbReference type="NCBI Taxonomy" id="311403"/>
    <lineage>
        <taxon>Bacteria</taxon>
        <taxon>Pseudomonadati</taxon>
        <taxon>Pseudomonadota</taxon>
        <taxon>Alphaproteobacteria</taxon>
        <taxon>Hyphomicrobiales</taxon>
        <taxon>Rhizobiaceae</taxon>
        <taxon>Rhizobium/Agrobacterium group</taxon>
        <taxon>Rhizobium</taxon>
    </lineage>
</organism>
<evidence type="ECO:0000255" key="1">
    <source>
        <dbReference type="HAMAP-Rule" id="MF_00074"/>
    </source>
</evidence>
<accession>B9JEW2</accession>
<dbReference type="EC" id="2.1.1.170" evidence="1"/>
<dbReference type="EMBL" id="CP000628">
    <property type="protein sequence ID" value="ACM28531.1"/>
    <property type="molecule type" value="Genomic_DNA"/>
</dbReference>
<dbReference type="RefSeq" id="WP_012653001.1">
    <property type="nucleotide sequence ID" value="NC_011985.1"/>
</dbReference>
<dbReference type="SMR" id="B9JEW2"/>
<dbReference type="STRING" id="311403.Arad_4940"/>
<dbReference type="KEGG" id="ara:Arad_4940"/>
<dbReference type="eggNOG" id="COG0357">
    <property type="taxonomic scope" value="Bacteria"/>
</dbReference>
<dbReference type="HOGENOM" id="CLU_065341_1_1_5"/>
<dbReference type="Proteomes" id="UP000001600">
    <property type="component" value="Chromosome 1"/>
</dbReference>
<dbReference type="GO" id="GO:0005829">
    <property type="term" value="C:cytosol"/>
    <property type="evidence" value="ECO:0007669"/>
    <property type="project" value="TreeGrafter"/>
</dbReference>
<dbReference type="GO" id="GO:0070043">
    <property type="term" value="F:rRNA (guanine-N7-)-methyltransferase activity"/>
    <property type="evidence" value="ECO:0007669"/>
    <property type="project" value="UniProtKB-UniRule"/>
</dbReference>
<dbReference type="Gene3D" id="3.40.50.150">
    <property type="entry name" value="Vaccinia Virus protein VP39"/>
    <property type="match status" value="1"/>
</dbReference>
<dbReference type="HAMAP" id="MF_00074">
    <property type="entry name" value="16SrRNA_methyltr_G"/>
    <property type="match status" value="1"/>
</dbReference>
<dbReference type="InterPro" id="IPR003682">
    <property type="entry name" value="rRNA_ssu_MeTfrase_G"/>
</dbReference>
<dbReference type="InterPro" id="IPR029063">
    <property type="entry name" value="SAM-dependent_MTases_sf"/>
</dbReference>
<dbReference type="NCBIfam" id="TIGR00138">
    <property type="entry name" value="rsmG_gidB"/>
    <property type="match status" value="1"/>
</dbReference>
<dbReference type="PANTHER" id="PTHR31760">
    <property type="entry name" value="S-ADENOSYL-L-METHIONINE-DEPENDENT METHYLTRANSFERASES SUPERFAMILY PROTEIN"/>
    <property type="match status" value="1"/>
</dbReference>
<dbReference type="PANTHER" id="PTHR31760:SF0">
    <property type="entry name" value="S-ADENOSYL-L-METHIONINE-DEPENDENT METHYLTRANSFERASES SUPERFAMILY PROTEIN"/>
    <property type="match status" value="1"/>
</dbReference>
<dbReference type="Pfam" id="PF02527">
    <property type="entry name" value="GidB"/>
    <property type="match status" value="1"/>
</dbReference>
<dbReference type="PIRSF" id="PIRSF003078">
    <property type="entry name" value="GidB"/>
    <property type="match status" value="1"/>
</dbReference>
<dbReference type="SUPFAM" id="SSF53335">
    <property type="entry name" value="S-adenosyl-L-methionine-dependent methyltransferases"/>
    <property type="match status" value="1"/>
</dbReference>
<gene>
    <name evidence="1" type="primary">rsmG</name>
    <name type="ordered locus">Arad_4940</name>
</gene>
<sequence>MELNGVRVSRETQGRLQHFAELFQKWAKTINLVAPSTVDDLWRRHIADSAQIFQLHPKPARWVDLGSGGGFPGIITAILLAEQKDGHVDLVESNQKKAAFLRVCLRECEARGAVHAVRIEEAPKIVADCDVISARALAELDMLLDYAAPWVERNENLRLLLHKGRDYEREVHKARGRWEFDLVKHNSVVESDSVILELTRPRRRI</sequence>
<protein>
    <recommendedName>
        <fullName evidence="1">Ribosomal RNA small subunit methyltransferase G</fullName>
        <ecNumber evidence="1">2.1.1.170</ecNumber>
    </recommendedName>
    <alternativeName>
        <fullName evidence="1">16S rRNA 7-methylguanosine methyltransferase</fullName>
        <shortName evidence="1">16S rRNA m7G methyltransferase</shortName>
    </alternativeName>
</protein>
<name>RSMG_RHIR8</name>
<keyword id="KW-0963">Cytoplasm</keyword>
<keyword id="KW-0489">Methyltransferase</keyword>
<keyword id="KW-0698">rRNA processing</keyword>
<keyword id="KW-0949">S-adenosyl-L-methionine</keyword>
<keyword id="KW-0808">Transferase</keyword>